<protein>
    <recommendedName>
        <fullName evidence="1">tRNA N6-adenosine threonylcarbamoyltransferase</fullName>
        <ecNumber evidence="1">2.3.1.234</ecNumber>
    </recommendedName>
    <alternativeName>
        <fullName evidence="1">N6-L-threonylcarbamoyladenine synthase</fullName>
        <shortName evidence="1">t(6)A synthase</shortName>
    </alternativeName>
    <alternativeName>
        <fullName evidence="1">t(6)A37 threonylcarbamoyladenosine biosynthesis protein TsaD</fullName>
    </alternativeName>
    <alternativeName>
        <fullName evidence="1">tRNA threonylcarbamoyladenosine biosynthesis protein TsaD</fullName>
    </alternativeName>
</protein>
<gene>
    <name evidence="1" type="primary">tsaD</name>
    <name type="synonym">gcp</name>
    <name type="ordered locus">BbuZS7_0797</name>
</gene>
<proteinExistence type="inferred from homology"/>
<organism>
    <name type="scientific">Borreliella burgdorferi (strain ZS7)</name>
    <name type="common">Borrelia burgdorferi</name>
    <dbReference type="NCBI Taxonomy" id="445985"/>
    <lineage>
        <taxon>Bacteria</taxon>
        <taxon>Pseudomonadati</taxon>
        <taxon>Spirochaetota</taxon>
        <taxon>Spirochaetia</taxon>
        <taxon>Spirochaetales</taxon>
        <taxon>Borreliaceae</taxon>
        <taxon>Borreliella</taxon>
    </lineage>
</organism>
<evidence type="ECO:0000255" key="1">
    <source>
        <dbReference type="HAMAP-Rule" id="MF_01445"/>
    </source>
</evidence>
<accession>B7J0L4</accession>
<comment type="function">
    <text evidence="1">Required for the formation of a threonylcarbamoyl group on adenosine at position 37 (t(6)A37) in tRNAs that read codons beginning with adenine. Is involved in the transfer of the threonylcarbamoyl moiety of threonylcarbamoyl-AMP (TC-AMP) to the N6 group of A37, together with TsaE and TsaB. TsaD likely plays a direct catalytic role in this reaction.</text>
</comment>
<comment type="catalytic activity">
    <reaction evidence="1">
        <text>L-threonylcarbamoyladenylate + adenosine(37) in tRNA = N(6)-L-threonylcarbamoyladenosine(37) in tRNA + AMP + H(+)</text>
        <dbReference type="Rhea" id="RHEA:37059"/>
        <dbReference type="Rhea" id="RHEA-COMP:10162"/>
        <dbReference type="Rhea" id="RHEA-COMP:10163"/>
        <dbReference type="ChEBI" id="CHEBI:15378"/>
        <dbReference type="ChEBI" id="CHEBI:73682"/>
        <dbReference type="ChEBI" id="CHEBI:74411"/>
        <dbReference type="ChEBI" id="CHEBI:74418"/>
        <dbReference type="ChEBI" id="CHEBI:456215"/>
        <dbReference type="EC" id="2.3.1.234"/>
    </reaction>
</comment>
<comment type="cofactor">
    <cofactor evidence="1">
        <name>Fe(2+)</name>
        <dbReference type="ChEBI" id="CHEBI:29033"/>
    </cofactor>
    <text evidence="1">Binds 1 Fe(2+) ion per subunit.</text>
</comment>
<comment type="subcellular location">
    <subcellularLocation>
        <location evidence="1">Cytoplasm</location>
    </subcellularLocation>
</comment>
<comment type="similarity">
    <text evidence="1">Belongs to the KAE1 / TsaD family.</text>
</comment>
<sequence length="346" mass="38482">MKVLGIETSCDDCCVAVVENGIHILSNIKLNQPEHKKYYGIVPEIASRLHTEAIMSVCIKALKKANTKISEIDLIAVTSRPGLIGSLIVGLNFAKGLAISLKKPIICIDHILGHLYAPLMHSKIEYPFISLLLSGGHTLIAKQKNFDDVEILGRTLDDACGEAFDKVAKHYDMGFPGGPNIEQISKNGDENTFQFPVTTFKKKENWYDFSYSGLKTACIHQLEKFKSKDNPTTKNNIAASFQKAAFENLITPLKRAIKDTQINKLVIAGGVASNLYLREKIDKLKIQTYYPPLDLCTDNGAMIAGLGFNMYLKYGESPIEIDANSRIENYKNQYRGKNNEKNFSNA</sequence>
<name>TSAD_BORBZ</name>
<feature type="chain" id="PRO_1000145948" description="tRNA N6-adenosine threonylcarbamoyltransferase">
    <location>
        <begin position="1"/>
        <end position="346"/>
    </location>
</feature>
<feature type="binding site" evidence="1">
    <location>
        <position position="110"/>
    </location>
    <ligand>
        <name>Fe cation</name>
        <dbReference type="ChEBI" id="CHEBI:24875"/>
    </ligand>
</feature>
<feature type="binding site" evidence="1">
    <location>
        <position position="114"/>
    </location>
    <ligand>
        <name>Fe cation</name>
        <dbReference type="ChEBI" id="CHEBI:24875"/>
    </ligand>
</feature>
<feature type="binding site" evidence="1">
    <location>
        <begin position="132"/>
        <end position="136"/>
    </location>
    <ligand>
        <name>substrate</name>
    </ligand>
</feature>
<feature type="binding site" evidence="1">
    <location>
        <position position="165"/>
    </location>
    <ligand>
        <name>substrate</name>
    </ligand>
</feature>
<feature type="binding site" evidence="1">
    <location>
        <position position="178"/>
    </location>
    <ligand>
        <name>substrate</name>
    </ligand>
</feature>
<feature type="binding site" evidence="1">
    <location>
        <position position="274"/>
    </location>
    <ligand>
        <name>substrate</name>
    </ligand>
</feature>
<feature type="binding site" evidence="1">
    <location>
        <position position="298"/>
    </location>
    <ligand>
        <name>Fe cation</name>
        <dbReference type="ChEBI" id="CHEBI:24875"/>
    </ligand>
</feature>
<keyword id="KW-0012">Acyltransferase</keyword>
<keyword id="KW-0963">Cytoplasm</keyword>
<keyword id="KW-0408">Iron</keyword>
<keyword id="KW-0479">Metal-binding</keyword>
<keyword id="KW-0808">Transferase</keyword>
<keyword id="KW-0819">tRNA processing</keyword>
<reference key="1">
    <citation type="journal article" date="2011" name="J. Bacteriol.">
        <title>Whole-genome sequences of thirteen isolates of Borrelia burgdorferi.</title>
        <authorList>
            <person name="Schutzer S.E."/>
            <person name="Fraser-Liggett C.M."/>
            <person name="Casjens S.R."/>
            <person name="Qiu W.G."/>
            <person name="Dunn J.J."/>
            <person name="Mongodin E.F."/>
            <person name="Luft B.J."/>
        </authorList>
    </citation>
    <scope>NUCLEOTIDE SEQUENCE [LARGE SCALE GENOMIC DNA]</scope>
    <source>
        <strain>ZS7</strain>
    </source>
</reference>
<dbReference type="EC" id="2.3.1.234" evidence="1"/>
<dbReference type="EMBL" id="CP001205">
    <property type="protein sequence ID" value="ACK74693.1"/>
    <property type="molecule type" value="Genomic_DNA"/>
</dbReference>
<dbReference type="RefSeq" id="WP_002657535.1">
    <property type="nucleotide sequence ID" value="NC_011728.1"/>
</dbReference>
<dbReference type="SMR" id="B7J0L4"/>
<dbReference type="GeneID" id="56567579"/>
<dbReference type="KEGG" id="bbz:BbuZS7_0797"/>
<dbReference type="HOGENOM" id="CLU_023208_0_2_12"/>
<dbReference type="Proteomes" id="UP000006901">
    <property type="component" value="Chromosome"/>
</dbReference>
<dbReference type="GO" id="GO:0005737">
    <property type="term" value="C:cytoplasm"/>
    <property type="evidence" value="ECO:0007669"/>
    <property type="project" value="UniProtKB-SubCell"/>
</dbReference>
<dbReference type="GO" id="GO:0005506">
    <property type="term" value="F:iron ion binding"/>
    <property type="evidence" value="ECO:0007669"/>
    <property type="project" value="UniProtKB-UniRule"/>
</dbReference>
<dbReference type="GO" id="GO:0061711">
    <property type="term" value="F:N(6)-L-threonylcarbamoyladenine synthase activity"/>
    <property type="evidence" value="ECO:0007669"/>
    <property type="project" value="UniProtKB-EC"/>
</dbReference>
<dbReference type="GO" id="GO:0002949">
    <property type="term" value="P:tRNA threonylcarbamoyladenosine modification"/>
    <property type="evidence" value="ECO:0007669"/>
    <property type="project" value="UniProtKB-UniRule"/>
</dbReference>
<dbReference type="CDD" id="cd24133">
    <property type="entry name" value="ASKHA_NBD_TsaD_bac"/>
    <property type="match status" value="1"/>
</dbReference>
<dbReference type="FunFam" id="3.30.420.40:FF:000040">
    <property type="entry name" value="tRNA N6-adenosine threonylcarbamoyltransferase"/>
    <property type="match status" value="1"/>
</dbReference>
<dbReference type="Gene3D" id="3.30.420.40">
    <property type="match status" value="2"/>
</dbReference>
<dbReference type="HAMAP" id="MF_01445">
    <property type="entry name" value="TsaD"/>
    <property type="match status" value="1"/>
</dbReference>
<dbReference type="InterPro" id="IPR043129">
    <property type="entry name" value="ATPase_NBD"/>
</dbReference>
<dbReference type="InterPro" id="IPR000905">
    <property type="entry name" value="Gcp-like_dom"/>
</dbReference>
<dbReference type="InterPro" id="IPR017861">
    <property type="entry name" value="KAE1/TsaD"/>
</dbReference>
<dbReference type="InterPro" id="IPR017860">
    <property type="entry name" value="Peptidase_M22_CS"/>
</dbReference>
<dbReference type="InterPro" id="IPR022450">
    <property type="entry name" value="TsaD"/>
</dbReference>
<dbReference type="NCBIfam" id="TIGR00329">
    <property type="entry name" value="gcp_kae1"/>
    <property type="match status" value="1"/>
</dbReference>
<dbReference type="NCBIfam" id="TIGR03723">
    <property type="entry name" value="T6A_TsaD_YgjD"/>
    <property type="match status" value="1"/>
</dbReference>
<dbReference type="PANTHER" id="PTHR11735">
    <property type="entry name" value="TRNA N6-ADENOSINE THREONYLCARBAMOYLTRANSFERASE"/>
    <property type="match status" value="1"/>
</dbReference>
<dbReference type="PANTHER" id="PTHR11735:SF6">
    <property type="entry name" value="TRNA N6-ADENOSINE THREONYLCARBAMOYLTRANSFERASE, MITOCHONDRIAL"/>
    <property type="match status" value="1"/>
</dbReference>
<dbReference type="Pfam" id="PF00814">
    <property type="entry name" value="TsaD"/>
    <property type="match status" value="1"/>
</dbReference>
<dbReference type="PRINTS" id="PR00789">
    <property type="entry name" value="OSIALOPTASE"/>
</dbReference>
<dbReference type="SUPFAM" id="SSF53067">
    <property type="entry name" value="Actin-like ATPase domain"/>
    <property type="match status" value="2"/>
</dbReference>
<dbReference type="PROSITE" id="PS01016">
    <property type="entry name" value="GLYCOPROTEASE"/>
    <property type="match status" value="1"/>
</dbReference>